<reference key="1">
    <citation type="journal article" date="2006" name="PLoS Genet.">
        <title>Who ate whom? Adaptive Helicobacter genomic changes that accompanied a host jump from early humans to large felines.</title>
        <authorList>
            <person name="Eppinger M."/>
            <person name="Baar C."/>
            <person name="Linz B."/>
            <person name="Raddatz G."/>
            <person name="Lanz C."/>
            <person name="Keller H."/>
            <person name="Morelli G."/>
            <person name="Gressmann H."/>
            <person name="Achtman M."/>
            <person name="Schuster S.C."/>
        </authorList>
    </citation>
    <scope>NUCLEOTIDE SEQUENCE [LARGE SCALE GENOMIC DNA]</scope>
    <source>
        <strain>Sheeba</strain>
    </source>
</reference>
<sequence>MNFEKIIAQNKLKTNAVLTTYCVIFAFIGLLVDVIRINANDLGIALFKLITFQIFPTITVIMFLVAFVVIVVCIQNFSSIMLSGDEYKLIDPSKVLSSKENQIHGLLLELLEEAKLNFEPKLYIINAPYMNAFASGWNETNSLIALTSALIERLDRDELKAVIAHELSHIRHNDIRLTMCVGILSNIMLLVANFSVYFFMGNRKNSGANLAKMILLVLQIVLPFLTLILQMYLSRTREYMADSGAAFLMHDSKPMIRALQKISNDYKENDYKEIDTNSTRSAAYLFNAEMFSTHPSIKNRIQSLSRRAL</sequence>
<accession>Q17WX4</accession>
<organism>
    <name type="scientific">Helicobacter acinonychis (strain Sheeba)</name>
    <dbReference type="NCBI Taxonomy" id="382638"/>
    <lineage>
        <taxon>Bacteria</taxon>
        <taxon>Pseudomonadati</taxon>
        <taxon>Campylobacterota</taxon>
        <taxon>Epsilonproteobacteria</taxon>
        <taxon>Campylobacterales</taxon>
        <taxon>Helicobacteraceae</taxon>
        <taxon>Helicobacter</taxon>
    </lineage>
</organism>
<name>HTPX_HELAH</name>
<comment type="cofactor">
    <cofactor evidence="1">
        <name>Zn(2+)</name>
        <dbReference type="ChEBI" id="CHEBI:29105"/>
    </cofactor>
    <text evidence="1">Binds 1 zinc ion per subunit.</text>
</comment>
<comment type="subcellular location">
    <subcellularLocation>
        <location evidence="1">Cell inner membrane</location>
        <topology evidence="1">Multi-pass membrane protein</topology>
    </subcellularLocation>
</comment>
<comment type="similarity">
    <text evidence="1">Belongs to the peptidase M48B family.</text>
</comment>
<dbReference type="EC" id="3.4.24.-" evidence="1"/>
<dbReference type="EMBL" id="AM260522">
    <property type="protein sequence ID" value="CAJ99852.1"/>
    <property type="molecule type" value="Genomic_DNA"/>
</dbReference>
<dbReference type="STRING" id="382638.Hac_1088"/>
<dbReference type="KEGG" id="hac:Hac_1088"/>
<dbReference type="eggNOG" id="COG0501">
    <property type="taxonomic scope" value="Bacteria"/>
</dbReference>
<dbReference type="HOGENOM" id="CLU_042266_2_1_7"/>
<dbReference type="Proteomes" id="UP000000775">
    <property type="component" value="Chromosome"/>
</dbReference>
<dbReference type="GO" id="GO:0005886">
    <property type="term" value="C:plasma membrane"/>
    <property type="evidence" value="ECO:0007669"/>
    <property type="project" value="UniProtKB-SubCell"/>
</dbReference>
<dbReference type="GO" id="GO:0004222">
    <property type="term" value="F:metalloendopeptidase activity"/>
    <property type="evidence" value="ECO:0007669"/>
    <property type="project" value="UniProtKB-UniRule"/>
</dbReference>
<dbReference type="GO" id="GO:0008270">
    <property type="term" value="F:zinc ion binding"/>
    <property type="evidence" value="ECO:0007669"/>
    <property type="project" value="UniProtKB-UniRule"/>
</dbReference>
<dbReference type="GO" id="GO:0006508">
    <property type="term" value="P:proteolysis"/>
    <property type="evidence" value="ECO:0007669"/>
    <property type="project" value="UniProtKB-KW"/>
</dbReference>
<dbReference type="Gene3D" id="3.30.2010.10">
    <property type="entry name" value="Metalloproteases ('zincins'), catalytic domain"/>
    <property type="match status" value="1"/>
</dbReference>
<dbReference type="HAMAP" id="MF_00188">
    <property type="entry name" value="Pept_M48_protease_HtpX"/>
    <property type="match status" value="1"/>
</dbReference>
<dbReference type="InterPro" id="IPR050083">
    <property type="entry name" value="HtpX_protease"/>
</dbReference>
<dbReference type="InterPro" id="IPR022919">
    <property type="entry name" value="Pept_M48_protease_HtpX"/>
</dbReference>
<dbReference type="InterPro" id="IPR001915">
    <property type="entry name" value="Peptidase_M48"/>
</dbReference>
<dbReference type="NCBIfam" id="NF002775">
    <property type="entry name" value="PRK02870.1"/>
    <property type="match status" value="1"/>
</dbReference>
<dbReference type="PANTHER" id="PTHR43221">
    <property type="entry name" value="PROTEASE HTPX"/>
    <property type="match status" value="1"/>
</dbReference>
<dbReference type="PANTHER" id="PTHR43221:SF1">
    <property type="entry name" value="PROTEASE HTPX"/>
    <property type="match status" value="1"/>
</dbReference>
<dbReference type="Pfam" id="PF01435">
    <property type="entry name" value="Peptidase_M48"/>
    <property type="match status" value="1"/>
</dbReference>
<gene>
    <name evidence="1" type="primary">htpX</name>
    <name type="ordered locus">Hac_1088</name>
</gene>
<feature type="chain" id="PRO_1000071689" description="Protease HtpX homolog">
    <location>
        <begin position="1"/>
        <end position="309"/>
    </location>
</feature>
<feature type="transmembrane region" description="Helical" evidence="1">
    <location>
        <begin position="15"/>
        <end position="35"/>
    </location>
</feature>
<feature type="transmembrane region" description="Helical" evidence="1">
    <location>
        <begin position="54"/>
        <end position="74"/>
    </location>
</feature>
<feature type="transmembrane region" description="Helical" evidence="1">
    <location>
        <begin position="181"/>
        <end position="201"/>
    </location>
</feature>
<feature type="transmembrane region" description="Helical" evidence="1">
    <location>
        <begin position="213"/>
        <end position="233"/>
    </location>
</feature>
<feature type="active site" evidence="1">
    <location>
        <position position="166"/>
    </location>
</feature>
<feature type="binding site" evidence="1">
    <location>
        <position position="165"/>
    </location>
    <ligand>
        <name>Zn(2+)</name>
        <dbReference type="ChEBI" id="CHEBI:29105"/>
        <note>catalytic</note>
    </ligand>
</feature>
<feature type="binding site" evidence="1">
    <location>
        <position position="169"/>
    </location>
    <ligand>
        <name>Zn(2+)</name>
        <dbReference type="ChEBI" id="CHEBI:29105"/>
        <note>catalytic</note>
    </ligand>
</feature>
<feature type="binding site" evidence="1">
    <location>
        <position position="238"/>
    </location>
    <ligand>
        <name>Zn(2+)</name>
        <dbReference type="ChEBI" id="CHEBI:29105"/>
        <note>catalytic</note>
    </ligand>
</feature>
<protein>
    <recommendedName>
        <fullName evidence="1">Protease HtpX homolog</fullName>
        <ecNumber evidence="1">3.4.24.-</ecNumber>
    </recommendedName>
</protein>
<proteinExistence type="inferred from homology"/>
<keyword id="KW-0997">Cell inner membrane</keyword>
<keyword id="KW-1003">Cell membrane</keyword>
<keyword id="KW-0378">Hydrolase</keyword>
<keyword id="KW-0472">Membrane</keyword>
<keyword id="KW-0479">Metal-binding</keyword>
<keyword id="KW-0482">Metalloprotease</keyword>
<keyword id="KW-0645">Protease</keyword>
<keyword id="KW-0812">Transmembrane</keyword>
<keyword id="KW-1133">Transmembrane helix</keyword>
<keyword id="KW-0862">Zinc</keyword>
<evidence type="ECO:0000255" key="1">
    <source>
        <dbReference type="HAMAP-Rule" id="MF_00188"/>
    </source>
</evidence>